<evidence type="ECO:0000250" key="1"/>
<evidence type="ECO:0000255" key="2"/>
<evidence type="ECO:0000305" key="3"/>
<sequence>MGGFSMAMLKDYVDVFVFAVLGVASFLALWFVIERVIFYSKVDLKAYDDIDALNLDLTKNLTILYVIFSNAPYVGLLGTVLGIMVIFYDMGVSGGMDAKTIMVGLSLALKATALGLAVAIPTLIAYNSLLRKSDVLSEKFRIMKT</sequence>
<proteinExistence type="inferred from homology"/>
<comment type="function">
    <text evidence="1">Involved in the TonB-dependent energy-dependent transport of various receptor-bound substrates. Protects ExbD from proteolytic degradation and functionally stabilizes TonB (By similarity).</text>
</comment>
<comment type="subunit">
    <text evidence="1">The accessory proteins ExbB and ExbD seem to form a complex with TonB.</text>
</comment>
<comment type="subcellular location">
    <subcellularLocation>
        <location>Cell inner membrane</location>
        <topology>Multi-pass membrane protein</topology>
    </subcellularLocation>
</comment>
<comment type="similarity">
    <text evidence="3">Belongs to the ExbB/TolQ family.</text>
</comment>
<accession>Q9ZJP6</accession>
<keyword id="KW-0997">Cell inner membrane</keyword>
<keyword id="KW-1003">Cell membrane</keyword>
<keyword id="KW-0472">Membrane</keyword>
<keyword id="KW-0653">Protein transport</keyword>
<keyword id="KW-0812">Transmembrane</keyword>
<keyword id="KW-1133">Transmembrane helix</keyword>
<keyword id="KW-0813">Transport</keyword>
<gene>
    <name type="primary">exbB</name>
    <name type="ordered locus">jhp_1258</name>
</gene>
<name>EXBB_HELPJ</name>
<dbReference type="EMBL" id="AE001439">
    <property type="protein sequence ID" value="AAD06831.1"/>
    <property type="molecule type" value="Genomic_DNA"/>
</dbReference>
<dbReference type="PIR" id="D71829">
    <property type="entry name" value="D71829"/>
</dbReference>
<dbReference type="RefSeq" id="WP_010882620.1">
    <property type="nucleotide sequence ID" value="NC_000921.1"/>
</dbReference>
<dbReference type="SMR" id="Q9ZJP6"/>
<dbReference type="KEGG" id="hpj:jhp_1258"/>
<dbReference type="PATRIC" id="fig|85963.30.peg.1313"/>
<dbReference type="eggNOG" id="COG0811">
    <property type="taxonomic scope" value="Bacteria"/>
</dbReference>
<dbReference type="Proteomes" id="UP000000804">
    <property type="component" value="Chromosome"/>
</dbReference>
<dbReference type="GO" id="GO:0005886">
    <property type="term" value="C:plasma membrane"/>
    <property type="evidence" value="ECO:0007669"/>
    <property type="project" value="UniProtKB-SubCell"/>
</dbReference>
<dbReference type="GO" id="GO:0017038">
    <property type="term" value="P:protein import"/>
    <property type="evidence" value="ECO:0007669"/>
    <property type="project" value="TreeGrafter"/>
</dbReference>
<dbReference type="GO" id="GO:0055085">
    <property type="term" value="P:transmembrane transport"/>
    <property type="evidence" value="ECO:0007669"/>
    <property type="project" value="InterPro"/>
</dbReference>
<dbReference type="InterPro" id="IPR050790">
    <property type="entry name" value="ExbB/TolQ_transport"/>
</dbReference>
<dbReference type="InterPro" id="IPR002898">
    <property type="entry name" value="MotA_ExbB_proton_chnl"/>
</dbReference>
<dbReference type="InterPro" id="IPR014172">
    <property type="entry name" value="TonB_ExbB_2"/>
</dbReference>
<dbReference type="NCBIfam" id="TIGR02805">
    <property type="entry name" value="exbB2"/>
    <property type="match status" value="1"/>
</dbReference>
<dbReference type="PANTHER" id="PTHR30625:SF15">
    <property type="entry name" value="BIOPOLYMER TRANSPORT PROTEIN EXBB"/>
    <property type="match status" value="1"/>
</dbReference>
<dbReference type="PANTHER" id="PTHR30625">
    <property type="entry name" value="PROTEIN TOLQ"/>
    <property type="match status" value="1"/>
</dbReference>
<dbReference type="Pfam" id="PF01618">
    <property type="entry name" value="MotA_ExbB"/>
    <property type="match status" value="1"/>
</dbReference>
<organism>
    <name type="scientific">Helicobacter pylori (strain J99 / ATCC 700824)</name>
    <name type="common">Campylobacter pylori J99</name>
    <dbReference type="NCBI Taxonomy" id="85963"/>
    <lineage>
        <taxon>Bacteria</taxon>
        <taxon>Pseudomonadati</taxon>
        <taxon>Campylobacterota</taxon>
        <taxon>Epsilonproteobacteria</taxon>
        <taxon>Campylobacterales</taxon>
        <taxon>Helicobacteraceae</taxon>
        <taxon>Helicobacter</taxon>
    </lineage>
</organism>
<protein>
    <recommendedName>
        <fullName>Biopolymer transport protein ExbB</fullName>
    </recommendedName>
</protein>
<feature type="chain" id="PRO_0000145804" description="Biopolymer transport protein ExbB">
    <location>
        <begin position="1"/>
        <end position="145"/>
    </location>
</feature>
<feature type="transmembrane region" description="Helical" evidence="2">
    <location>
        <begin position="13"/>
        <end position="33"/>
    </location>
</feature>
<feature type="transmembrane region" description="Helical" evidence="2">
    <location>
        <begin position="67"/>
        <end position="87"/>
    </location>
</feature>
<feature type="transmembrane region" description="Helical" evidence="2">
    <location>
        <begin position="101"/>
        <end position="121"/>
    </location>
</feature>
<reference key="1">
    <citation type="journal article" date="1999" name="Nature">
        <title>Genomic sequence comparison of two unrelated isolates of the human gastric pathogen Helicobacter pylori.</title>
        <authorList>
            <person name="Alm R.A."/>
            <person name="Ling L.-S.L."/>
            <person name="Moir D.T."/>
            <person name="King B.L."/>
            <person name="Brown E.D."/>
            <person name="Doig P.C."/>
            <person name="Smith D.R."/>
            <person name="Noonan B."/>
            <person name="Guild B.C."/>
            <person name="deJonge B.L."/>
            <person name="Carmel G."/>
            <person name="Tummino P.J."/>
            <person name="Caruso A."/>
            <person name="Uria-Nickelsen M."/>
            <person name="Mills D.M."/>
            <person name="Ives C."/>
            <person name="Gibson R."/>
            <person name="Merberg D."/>
            <person name="Mills S.D."/>
            <person name="Jiang Q."/>
            <person name="Taylor D.E."/>
            <person name="Vovis G.F."/>
            <person name="Trust T.J."/>
        </authorList>
    </citation>
    <scope>NUCLEOTIDE SEQUENCE [LARGE SCALE GENOMIC DNA]</scope>
    <source>
        <strain>J99 / ATCC 700824</strain>
    </source>
</reference>